<name>SYDP_YERPG</name>
<comment type="function">
    <text evidence="1">Interacts with the SecY protein in vivo. May bind preferentially to an uncomplexed state of SecY, thus functioning either as a chelating agent for excess SecY in the cell or as a regulatory factor that negatively controls the translocase function.</text>
</comment>
<comment type="subcellular location">
    <subcellularLocation>
        <location evidence="1">Cell inner membrane</location>
        <topology evidence="1">Peripheral membrane protein</topology>
        <orientation evidence="1">Cytoplasmic side</orientation>
    </subcellularLocation>
    <text evidence="1">Loosely associated with the cytoplasmic side of the inner membrane, probably via SecY.</text>
</comment>
<comment type="similarity">
    <text evidence="1">Belongs to the Syd family.</text>
</comment>
<evidence type="ECO:0000255" key="1">
    <source>
        <dbReference type="HAMAP-Rule" id="MF_01104"/>
    </source>
</evidence>
<keyword id="KW-0997">Cell inner membrane</keyword>
<keyword id="KW-1003">Cell membrane</keyword>
<keyword id="KW-0472">Membrane</keyword>
<gene>
    <name evidence="1" type="primary">syd</name>
    <name type="ordered locus">YpAngola_A3158</name>
</gene>
<reference key="1">
    <citation type="journal article" date="2010" name="J. Bacteriol.">
        <title>Genome sequence of the deep-rooted Yersinia pestis strain Angola reveals new insights into the evolution and pangenome of the plague bacterium.</title>
        <authorList>
            <person name="Eppinger M."/>
            <person name="Worsham P.L."/>
            <person name="Nikolich M.P."/>
            <person name="Riley D.R."/>
            <person name="Sebastian Y."/>
            <person name="Mou S."/>
            <person name="Achtman M."/>
            <person name="Lindler L.E."/>
            <person name="Ravel J."/>
        </authorList>
    </citation>
    <scope>NUCLEOTIDE SEQUENCE [LARGE SCALE GENOMIC DNA]</scope>
    <source>
        <strain>Angola</strain>
    </source>
</reference>
<organism>
    <name type="scientific">Yersinia pestis bv. Antiqua (strain Angola)</name>
    <dbReference type="NCBI Taxonomy" id="349746"/>
    <lineage>
        <taxon>Bacteria</taxon>
        <taxon>Pseudomonadati</taxon>
        <taxon>Pseudomonadota</taxon>
        <taxon>Gammaproteobacteria</taxon>
        <taxon>Enterobacterales</taxon>
        <taxon>Yersiniaceae</taxon>
        <taxon>Yersinia</taxon>
    </lineage>
</organism>
<proteinExistence type="inferred from homology"/>
<feature type="chain" id="PRO_1000137046" description="Protein Syd">
    <location>
        <begin position="1"/>
        <end position="183"/>
    </location>
</feature>
<sequence>MDLNISTALRSFTQRYIDLWQQQTGHLPASKELYGVPSPCIVETGEDQVFWQPQAFLPEATLTNIERALEIQLHPDIHDFYTQQYAGDMMADLGNHRFTLLQVWSEDDFIRLQENLIGHLVTQKRLKLSPTLFLATTSSEMTMASLCNVSGNVVLEQFGSDKRTLLASTLSHFLDALRPVLPE</sequence>
<protein>
    <recommendedName>
        <fullName evidence="1">Protein Syd</fullName>
    </recommendedName>
</protein>
<dbReference type="EMBL" id="CP000901">
    <property type="protein sequence ID" value="ABX88013.1"/>
    <property type="molecule type" value="Genomic_DNA"/>
</dbReference>
<dbReference type="RefSeq" id="WP_002212123.1">
    <property type="nucleotide sequence ID" value="NZ_CP009935.1"/>
</dbReference>
<dbReference type="SMR" id="A9R2J4"/>
<dbReference type="GeneID" id="57977526"/>
<dbReference type="KEGG" id="ypg:YpAngola_A3158"/>
<dbReference type="PATRIC" id="fig|349746.12.peg.4217"/>
<dbReference type="GO" id="GO:0009898">
    <property type="term" value="C:cytoplasmic side of plasma membrane"/>
    <property type="evidence" value="ECO:0007669"/>
    <property type="project" value="InterPro"/>
</dbReference>
<dbReference type="CDD" id="cd16323">
    <property type="entry name" value="Syd"/>
    <property type="match status" value="1"/>
</dbReference>
<dbReference type="Gene3D" id="3.40.1580.20">
    <property type="entry name" value="Syd protein"/>
    <property type="match status" value="1"/>
</dbReference>
<dbReference type="HAMAP" id="MF_01104">
    <property type="entry name" value="Syd"/>
    <property type="match status" value="1"/>
</dbReference>
<dbReference type="InterPro" id="IPR009948">
    <property type="entry name" value="Syd"/>
</dbReference>
<dbReference type="InterPro" id="IPR038228">
    <property type="entry name" value="Syd_sf"/>
</dbReference>
<dbReference type="NCBIfam" id="NF003439">
    <property type="entry name" value="PRK04968.1"/>
    <property type="match status" value="1"/>
</dbReference>
<dbReference type="Pfam" id="PF07348">
    <property type="entry name" value="Syd"/>
    <property type="match status" value="1"/>
</dbReference>
<accession>A9R2J4</accession>